<keyword id="KW-0002">3D-structure</keyword>
<keyword id="KW-0025">Alternative splicing</keyword>
<keyword id="KW-1003">Cell membrane</keyword>
<keyword id="KW-0449">Lipoprotein</keyword>
<keyword id="KW-0472">Membrane</keyword>
<keyword id="KW-0488">Methylation</keyword>
<keyword id="KW-0489">Methyltransferase</keyword>
<keyword id="KW-0519">Myristate</keyword>
<keyword id="KW-1267">Proteomics identification</keyword>
<keyword id="KW-1185">Reference proteome</keyword>
<keyword id="KW-0677">Repeat</keyword>
<keyword id="KW-0949">S-adenosyl-L-methionine</keyword>
<keyword id="KW-0808">Transferase</keyword>
<proteinExistence type="evidence at protein level"/>
<protein>
    <recommendedName>
        <fullName evidence="10">Protein arginine N-methyltransferase 8</fullName>
        <ecNumber evidence="4 5 6">2.1.1.319</ecNumber>
    </recommendedName>
    <alternativeName>
        <fullName>Heterogeneous nuclear ribonucleoprotein methyltransferase-like protein 4</fullName>
    </alternativeName>
</protein>
<accession>Q9NR22</accession>
<accession>B2RDP0</accession>
<accession>Q8TBJ8</accession>
<gene>
    <name evidence="14" type="primary">PRMT8</name>
    <name type="synonym">HRMT1L3</name>
    <name type="synonym">HRMT1L4</name>
</gene>
<comment type="function">
    <text evidence="4 5 6 7 8">S-adenosyl-L-methionine-dependent and membrane-associated arginine methyltransferase that can both catalyze the formation of omega-N monomethylarginine (MMA) and asymmetrical dimethylarginine (aDMA) in proteins such as NIFK, myelin basic protein, histone H4, H2A and H2A/H2B dimer (PubMed:16051612, PubMed:17925405, PubMed:26529540, PubMed:26876602). Able to mono- and dimethylate EWS protein; however its precise role toward EWS remains unclear as it still interacts with fully methylated EWS (PubMed:18320585).</text>
</comment>
<comment type="catalytic activity">
    <reaction evidence="4 5 6">
        <text>L-arginyl-[protein] + S-adenosyl-L-methionine = N(omega)-methyl-L-arginyl-[protein] + S-adenosyl-L-homocysteine + H(+)</text>
        <dbReference type="Rhea" id="RHEA:48100"/>
        <dbReference type="Rhea" id="RHEA-COMP:10532"/>
        <dbReference type="Rhea" id="RHEA-COMP:11990"/>
        <dbReference type="ChEBI" id="CHEBI:15378"/>
        <dbReference type="ChEBI" id="CHEBI:29965"/>
        <dbReference type="ChEBI" id="CHEBI:57856"/>
        <dbReference type="ChEBI" id="CHEBI:59789"/>
        <dbReference type="ChEBI" id="CHEBI:65280"/>
    </reaction>
    <physiologicalReaction direction="left-to-right" evidence="11">
        <dbReference type="Rhea" id="RHEA:48101"/>
    </physiologicalReaction>
</comment>
<comment type="catalytic activity">
    <reaction evidence="4 5 6">
        <text>L-arginyl-[protein] + 2 S-adenosyl-L-methionine = N(omega),N(omega)-dimethyl-L-arginyl-[protein] + 2 S-adenosyl-L-homocysteine + 2 H(+)</text>
        <dbReference type="Rhea" id="RHEA:48096"/>
        <dbReference type="Rhea" id="RHEA-COMP:10532"/>
        <dbReference type="Rhea" id="RHEA-COMP:11991"/>
        <dbReference type="ChEBI" id="CHEBI:15378"/>
        <dbReference type="ChEBI" id="CHEBI:29965"/>
        <dbReference type="ChEBI" id="CHEBI:57856"/>
        <dbReference type="ChEBI" id="CHEBI:59789"/>
        <dbReference type="ChEBI" id="CHEBI:61897"/>
        <dbReference type="EC" id="2.1.1.319"/>
    </reaction>
    <physiologicalReaction direction="left-to-right" evidence="11">
        <dbReference type="Rhea" id="RHEA:48097"/>
    </physiologicalReaction>
</comment>
<comment type="biophysicochemical properties">
    <kinetics>
        <KM evidence="6">1.3 uM for GRGGFGGRGGFRGGRGG-NH2</KM>
    </kinetics>
</comment>
<comment type="subunit">
    <text evidence="4 5 6 7 8">Homodimer (PubMed:16051612, PubMed:26529540, PubMed:26876602). Tetramer; individual homodimers associates to form a homotetramer (PubMed:26529540). Homooctamer; individual homodimers associates to form a homooctamer and homooligomerization is required for proper localization to the cell membrane (PubMed:26876602). Heterodimer with PRMT1; heterodimerization may recruit PRMT1 activity to the plasma membrane (PubMed:16051612). Interacts with PRMT2 (via the SH3 domain) (PubMed:17925405). Interacts with FYN (via the SH3 domain) (PubMed:17925405). Interacts with EWS; independently of EWS methylation status (PubMed:18320585).</text>
</comment>
<comment type="interaction">
    <interactant intactId="EBI-745545">
        <id>Q9NR22</id>
    </interactant>
    <interactant intactId="EBI-22311199">
        <id>Q3LI67</id>
        <label>KRTAP6-3</label>
    </interactant>
    <organismsDiffer>false</organismsDiffer>
    <experiments>3</experiments>
</comment>
<comment type="interaction">
    <interactant intactId="EBI-745545">
        <id>Q9NR22</id>
    </interactant>
    <interactant intactId="EBI-78738">
        <id>Q99873</id>
        <label>PRMT1</label>
    </interactant>
    <organismsDiffer>false</organismsDiffer>
    <experiments>5</experiments>
</comment>
<comment type="interaction">
    <interactant intactId="EBI-745545">
        <id>Q9NR22</id>
    </interactant>
    <interactant intactId="EBI-17165527">
        <id>Q99873-3</id>
        <label>PRMT1</label>
    </interactant>
    <organismsDiffer>false</organismsDiffer>
    <experiments>10</experiments>
</comment>
<comment type="interaction">
    <interactant intactId="EBI-745545">
        <id>Q9NR22</id>
    </interactant>
    <interactant intactId="EBI-745545">
        <id>Q9NR22</id>
        <label>PRMT8</label>
    </interactant>
    <organismsDiffer>false</organismsDiffer>
    <experiments>9</experiments>
</comment>
<comment type="interaction">
    <interactant intactId="EBI-745545">
        <id>Q9NR22</id>
    </interactant>
    <interactant intactId="EBI-1024357">
        <id>O60506</id>
        <label>SYNCRIP</label>
    </interactant>
    <organismsDiffer>false</organismsDiffer>
    <experiments>6</experiments>
</comment>
<comment type="interaction">
    <interactant intactId="EBI-745545">
        <id>Q9NR22</id>
    </interactant>
    <interactant intactId="EBI-11123832">
        <id>O60506-4</id>
        <label>SYNCRIP</label>
    </interactant>
    <organismsDiffer>false</organismsDiffer>
    <experiments>3</experiments>
</comment>
<comment type="interaction">
    <interactant intactId="EBI-745545">
        <id>Q9NR22</id>
    </interactant>
    <interactant intactId="EBI-12076664">
        <id>O14787-2</id>
        <label>TNPO2</label>
    </interactant>
    <organismsDiffer>false</organismsDiffer>
    <experiments>3</experiments>
</comment>
<comment type="interaction">
    <interactant intactId="EBI-745545">
        <id>Q9NR22</id>
    </interactant>
    <interactant intactId="EBI-607755">
        <id>Q9BZL1</id>
        <label>UBL5</label>
    </interactant>
    <organismsDiffer>false</organismsDiffer>
    <experiments>3</experiments>
</comment>
<comment type="interaction">
    <interactant intactId="EBI-10186886">
        <id>Q9NR22-2</id>
    </interactant>
    <interactant intactId="EBI-78738">
        <id>Q99873</id>
        <label>PRMT1</label>
    </interactant>
    <organismsDiffer>false</organismsDiffer>
    <experiments>5</experiments>
</comment>
<comment type="interaction">
    <interactant intactId="EBI-10186886">
        <id>Q9NR22-2</id>
    </interactant>
    <interactant intactId="EBI-10186886">
        <id>Q9NR22-2</id>
        <label>PRMT8</label>
    </interactant>
    <organismsDiffer>false</organismsDiffer>
    <experiments>3</experiments>
</comment>
<comment type="interaction">
    <interactant intactId="EBI-10186886">
        <id>Q9NR22-2</id>
    </interactant>
    <interactant intactId="EBI-1024357">
        <id>O60506</id>
        <label>SYNCRIP</label>
    </interactant>
    <organismsDiffer>false</organismsDiffer>
    <experiments>3</experiments>
</comment>
<comment type="subcellular location">
    <subcellularLocation>
        <location evidence="4 6 8">Cell membrane</location>
        <topology evidence="4 6 8">Lipid-anchor</topology>
        <orientation evidence="4 6 8">Cytoplasmic side</orientation>
    </subcellularLocation>
</comment>
<comment type="alternative products">
    <event type="alternative splicing"/>
    <isoform>
        <id>Q9NR22-1</id>
        <name>1</name>
        <sequence type="displayed"/>
    </isoform>
    <isoform>
        <id>Q9NR22-2</id>
        <name>2</name>
        <sequence type="described" ref="VSP_037466"/>
    </isoform>
</comment>
<comment type="tissue specificity">
    <text evidence="4">Brain-specific.</text>
</comment>
<comment type="domain">
    <text evidence="5">The SH3-binding motifs mediate the interaction with SH3 domain-containing proteins such as PRMT2 and FYN, possibly leading to displace the N-terminal domain and activate the protein.</text>
</comment>
<comment type="domain">
    <text evidence="5">The N-terminal region (1-60) inhibits the arginine N-methyltransferase activity.</text>
</comment>
<comment type="similarity">
    <text evidence="2">Belongs to the class I-like SAM-binding methyltransferase superfamily. Protein arginine N-methyltransferase family. PRMT8 subfamily.</text>
</comment>
<comment type="sequence caution" evidence="10">
    <conflict type="erroneous initiation">
        <sequence resource="EMBL-CDS" id="AAF91390"/>
    </conflict>
</comment>
<comment type="sequence caution" evidence="10">
    <conflict type="frameshift">
        <sequence resource="EMBL-CDS" id="BAG37987"/>
    </conflict>
</comment>
<sequence length="394" mass="45291">MGMKHSSRCLLLRRKMAENAAESTEVNSPPSQPPQPVVPAKPVQCVHHVSTQPSCPGRGKMSKLLNPEEMTSRDYYFDSYAHFGIHEEMLKDEVRTLTYRNSMYHNKHVFKDKVVLDVGSGTGILSMFAAKAGAKKVFGIECSSISDYSEKIIKANHLDNIITIFKGKVEEVELPVEKVDIIISEWMGYCLFYESMLNTVIFARDKWLKPGGLMFPDRAALYVVAIEDRQYKDFKIHWWENVYGFDMTCIRDVAMKEPLVDIVDPKQVVTNACLIKEVDIYTVKTEELSFTSAFCLQIQRNDYVHALVTYFNIEFTKCHKKMGFSTAPDAPYTHWKQTVFYLEDYLTVRRGEEIYGTISMKPNAKNVRDLDFTVDLDFKGQLCETSVSNDYKMR</sequence>
<dbReference type="EC" id="2.1.1.319" evidence="4 5 6"/>
<dbReference type="EMBL" id="AK315619">
    <property type="protein sequence ID" value="BAG37987.1"/>
    <property type="status" value="ALT_FRAME"/>
    <property type="molecule type" value="mRNA"/>
</dbReference>
<dbReference type="EMBL" id="AC005831">
    <property type="status" value="NOT_ANNOTATED_CDS"/>
    <property type="molecule type" value="Genomic_DNA"/>
</dbReference>
<dbReference type="EMBL" id="AC005908">
    <property type="status" value="NOT_ANNOTATED_CDS"/>
    <property type="molecule type" value="Genomic_DNA"/>
</dbReference>
<dbReference type="EMBL" id="AC005925">
    <property type="status" value="NOT_ANNOTATED_CDS"/>
    <property type="molecule type" value="Genomic_DNA"/>
</dbReference>
<dbReference type="EMBL" id="BC022458">
    <property type="protein sequence ID" value="AAH22458.2"/>
    <property type="molecule type" value="mRNA"/>
</dbReference>
<dbReference type="EMBL" id="AF263539">
    <property type="protein sequence ID" value="AAF91390.1"/>
    <property type="status" value="ALT_INIT"/>
    <property type="molecule type" value="mRNA"/>
</dbReference>
<dbReference type="CCDS" id="CCDS58200.1">
    <molecule id="Q9NR22-2"/>
</dbReference>
<dbReference type="CCDS" id="CCDS8521.2">
    <molecule id="Q9NR22-1"/>
</dbReference>
<dbReference type="RefSeq" id="NP_001243465.1">
    <molecule id="Q9NR22-2"/>
    <property type="nucleotide sequence ID" value="NM_001256536.1"/>
</dbReference>
<dbReference type="RefSeq" id="NP_062828.3">
    <molecule id="Q9NR22-1"/>
    <property type="nucleotide sequence ID" value="NM_019854.4"/>
</dbReference>
<dbReference type="PDB" id="4X41">
    <property type="method" value="X-ray"/>
    <property type="resolution" value="3.50 A"/>
    <property type="chains" value="A/B=61-394"/>
</dbReference>
<dbReference type="PDB" id="5DST">
    <property type="method" value="X-ray"/>
    <property type="resolution" value="2.96 A"/>
    <property type="chains" value="A/B/C/D/E/F/G/H/I/J/K/L/M/N/O=68-394"/>
</dbReference>
<dbReference type="PDBsum" id="4X41"/>
<dbReference type="PDBsum" id="5DST"/>
<dbReference type="SMR" id="Q9NR22"/>
<dbReference type="BioGRID" id="121140">
    <property type="interactions" value="92"/>
</dbReference>
<dbReference type="ELM" id="Q9NR22"/>
<dbReference type="FunCoup" id="Q9NR22">
    <property type="interactions" value="249"/>
</dbReference>
<dbReference type="IntAct" id="Q9NR22">
    <property type="interactions" value="53"/>
</dbReference>
<dbReference type="MINT" id="Q9NR22"/>
<dbReference type="STRING" id="9606.ENSP00000372067"/>
<dbReference type="BindingDB" id="Q9NR22"/>
<dbReference type="ChEMBL" id="CHEMBL3108648"/>
<dbReference type="GuidetoPHARMACOLOGY" id="1259"/>
<dbReference type="GlyGen" id="Q9NR22">
    <property type="glycosylation" value="1 site, 1 O-linked glycan (1 site)"/>
</dbReference>
<dbReference type="iPTMnet" id="Q9NR22"/>
<dbReference type="PhosphoSitePlus" id="Q9NR22"/>
<dbReference type="BioMuta" id="PRMT8"/>
<dbReference type="DMDM" id="88983969"/>
<dbReference type="jPOST" id="Q9NR22"/>
<dbReference type="MassIVE" id="Q9NR22"/>
<dbReference type="PaxDb" id="9606-ENSP00000372067"/>
<dbReference type="PeptideAtlas" id="Q9NR22"/>
<dbReference type="ProteomicsDB" id="82259">
    <molecule id="Q9NR22-1"/>
</dbReference>
<dbReference type="ProteomicsDB" id="82260">
    <molecule id="Q9NR22-2"/>
</dbReference>
<dbReference type="Antibodypedia" id="10506">
    <property type="antibodies" value="175 antibodies from 28 providers"/>
</dbReference>
<dbReference type="DNASU" id="56341"/>
<dbReference type="Ensembl" id="ENST00000382622.4">
    <molecule id="Q9NR22-1"/>
    <property type="protein sequence ID" value="ENSP00000372067.3"/>
    <property type="gene ID" value="ENSG00000111218.12"/>
</dbReference>
<dbReference type="Ensembl" id="ENST00000452611.6">
    <molecule id="Q9NR22-2"/>
    <property type="protein sequence ID" value="ENSP00000414507.2"/>
    <property type="gene ID" value="ENSG00000111218.12"/>
</dbReference>
<dbReference type="GeneID" id="56341"/>
<dbReference type="KEGG" id="hsa:56341"/>
<dbReference type="MANE-Select" id="ENST00000382622.4">
    <property type="protein sequence ID" value="ENSP00000372067.3"/>
    <property type="RefSeq nucleotide sequence ID" value="NM_019854.5"/>
    <property type="RefSeq protein sequence ID" value="NP_062828.3"/>
</dbReference>
<dbReference type="UCSC" id="uc001qmf.5">
    <molecule id="Q9NR22-1"/>
    <property type="organism name" value="human"/>
</dbReference>
<dbReference type="AGR" id="HGNC:5188"/>
<dbReference type="CTD" id="56341"/>
<dbReference type="DisGeNET" id="56341"/>
<dbReference type="GeneCards" id="PRMT8"/>
<dbReference type="HGNC" id="HGNC:5188">
    <property type="gene designation" value="PRMT8"/>
</dbReference>
<dbReference type="HPA" id="ENSG00000111218">
    <property type="expression patterns" value="Tissue enriched (brain)"/>
</dbReference>
<dbReference type="MIM" id="610086">
    <property type="type" value="gene"/>
</dbReference>
<dbReference type="neXtProt" id="NX_Q9NR22"/>
<dbReference type="OpenTargets" id="ENSG00000111218"/>
<dbReference type="PharmGKB" id="PA134903406"/>
<dbReference type="VEuPathDB" id="HostDB:ENSG00000111218"/>
<dbReference type="eggNOG" id="KOG1499">
    <property type="taxonomic scope" value="Eukaryota"/>
</dbReference>
<dbReference type="GeneTree" id="ENSGT00940000155867"/>
<dbReference type="HOGENOM" id="CLU_017375_1_1_1"/>
<dbReference type="InParanoid" id="Q9NR22"/>
<dbReference type="OMA" id="CTHTKVK"/>
<dbReference type="OrthoDB" id="7848332at2759"/>
<dbReference type="PAN-GO" id="Q9NR22">
    <property type="GO annotations" value="1 GO annotation based on evolutionary models"/>
</dbReference>
<dbReference type="PhylomeDB" id="Q9NR22"/>
<dbReference type="TreeFam" id="TF300608"/>
<dbReference type="BioCyc" id="MetaCyc:ENSG00000111218-MONOMER"/>
<dbReference type="BRENDA" id="2.1.1.319">
    <property type="organism ID" value="2681"/>
</dbReference>
<dbReference type="PathwayCommons" id="Q9NR22"/>
<dbReference type="SABIO-RK" id="Q9NR22"/>
<dbReference type="SignaLink" id="Q9NR22"/>
<dbReference type="BioGRID-ORCS" id="56341">
    <property type="hits" value="10 hits in 1159 CRISPR screens"/>
</dbReference>
<dbReference type="ChiTaRS" id="PRMT8">
    <property type="organism name" value="human"/>
</dbReference>
<dbReference type="GenomeRNAi" id="56341"/>
<dbReference type="Pharos" id="Q9NR22">
    <property type="development level" value="Tchem"/>
</dbReference>
<dbReference type="PRO" id="PR:Q9NR22"/>
<dbReference type="Proteomes" id="UP000005640">
    <property type="component" value="Chromosome 12"/>
</dbReference>
<dbReference type="RNAct" id="Q9NR22">
    <property type="molecule type" value="protein"/>
</dbReference>
<dbReference type="Bgee" id="ENSG00000111218">
    <property type="expression patterns" value="Expressed in middle temporal gyrus and 66 other cell types or tissues"/>
</dbReference>
<dbReference type="GO" id="GO:0009898">
    <property type="term" value="C:cytoplasmic side of plasma membrane"/>
    <property type="evidence" value="ECO:0000314"/>
    <property type="project" value="UniProtKB"/>
</dbReference>
<dbReference type="GO" id="GO:0005886">
    <property type="term" value="C:plasma membrane"/>
    <property type="evidence" value="ECO:0000314"/>
    <property type="project" value="UniProtKB"/>
</dbReference>
<dbReference type="GO" id="GO:0019899">
    <property type="term" value="F:enzyme binding"/>
    <property type="evidence" value="ECO:0000314"/>
    <property type="project" value="HGNC-UCL"/>
</dbReference>
<dbReference type="GO" id="GO:0140939">
    <property type="term" value="F:histone H4 methyltransferase activity"/>
    <property type="evidence" value="ECO:0000314"/>
    <property type="project" value="HGNC-UCL"/>
</dbReference>
<dbReference type="GO" id="GO:0042054">
    <property type="term" value="F:histone methyltransferase activity"/>
    <property type="evidence" value="ECO:0000318"/>
    <property type="project" value="GO_Central"/>
</dbReference>
<dbReference type="GO" id="GO:0042802">
    <property type="term" value="F:identical protein binding"/>
    <property type="evidence" value="ECO:0000314"/>
    <property type="project" value="UniProtKB"/>
</dbReference>
<dbReference type="GO" id="GO:0042803">
    <property type="term" value="F:protein homodimerization activity"/>
    <property type="evidence" value="ECO:0000353"/>
    <property type="project" value="HGNC-UCL"/>
</dbReference>
<dbReference type="GO" id="GO:0035242">
    <property type="term" value="F:protein-arginine omega-N asymmetric methyltransferase activity"/>
    <property type="evidence" value="ECO:0000314"/>
    <property type="project" value="UniProtKB"/>
</dbReference>
<dbReference type="GO" id="GO:0035241">
    <property type="term" value="F:protein-arginine omega-N monomethyltransferase activity"/>
    <property type="evidence" value="ECO:0000314"/>
    <property type="project" value="UniProtKB"/>
</dbReference>
<dbReference type="GO" id="GO:1904047">
    <property type="term" value="F:S-adenosyl-L-methionine binding"/>
    <property type="evidence" value="ECO:0000314"/>
    <property type="project" value="UniProtKB"/>
</dbReference>
<dbReference type="GO" id="GO:0008757">
    <property type="term" value="F:S-adenosylmethionine-dependent methyltransferase activity"/>
    <property type="evidence" value="ECO:0000314"/>
    <property type="project" value="HGNC-UCL"/>
</dbReference>
<dbReference type="GO" id="GO:0006338">
    <property type="term" value="P:chromatin remodeling"/>
    <property type="evidence" value="ECO:0000318"/>
    <property type="project" value="GO_Central"/>
</dbReference>
<dbReference type="GO" id="GO:0018216">
    <property type="term" value="P:peptidyl-arginine methylation"/>
    <property type="evidence" value="ECO:0000314"/>
    <property type="project" value="UniProtKB"/>
</dbReference>
<dbReference type="GO" id="GO:0051260">
    <property type="term" value="P:protein homooligomerization"/>
    <property type="evidence" value="ECO:0000314"/>
    <property type="project" value="UniProtKB"/>
</dbReference>
<dbReference type="GO" id="GO:0006479">
    <property type="term" value="P:protein methylation"/>
    <property type="evidence" value="ECO:0000315"/>
    <property type="project" value="UniProtKB"/>
</dbReference>
<dbReference type="GO" id="GO:0006355">
    <property type="term" value="P:regulation of DNA-templated transcription"/>
    <property type="evidence" value="ECO:0000318"/>
    <property type="project" value="GO_Central"/>
</dbReference>
<dbReference type="GO" id="GO:1905274">
    <property type="term" value="P:regulation of modification of postsynaptic actin cytoskeleton"/>
    <property type="evidence" value="ECO:0007669"/>
    <property type="project" value="Ensembl"/>
</dbReference>
<dbReference type="CDD" id="cd02440">
    <property type="entry name" value="AdoMet_MTases"/>
    <property type="match status" value="1"/>
</dbReference>
<dbReference type="FunFam" id="2.70.160.11:FF:000001">
    <property type="entry name" value="Blast:Protein arginine N-methyltransferase 1"/>
    <property type="match status" value="1"/>
</dbReference>
<dbReference type="FunFam" id="3.40.50.150:FF:000003">
    <property type="entry name" value="Blast:Protein arginine N-methyltransferase 1"/>
    <property type="match status" value="1"/>
</dbReference>
<dbReference type="Gene3D" id="2.70.160.11">
    <property type="entry name" value="Hnrnp arginine n-methyltransferase1"/>
    <property type="match status" value="1"/>
</dbReference>
<dbReference type="Gene3D" id="3.40.50.150">
    <property type="entry name" value="Vaccinia Virus protein VP39"/>
    <property type="match status" value="1"/>
</dbReference>
<dbReference type="InterPro" id="IPR025799">
    <property type="entry name" value="Arg_MeTrfase"/>
</dbReference>
<dbReference type="InterPro" id="IPR055135">
    <property type="entry name" value="PRMT_dom"/>
</dbReference>
<dbReference type="InterPro" id="IPR029063">
    <property type="entry name" value="SAM-dependent_MTases_sf"/>
</dbReference>
<dbReference type="PANTHER" id="PTHR11006">
    <property type="entry name" value="PROTEIN ARGININE N-METHYLTRANSFERASE"/>
    <property type="match status" value="1"/>
</dbReference>
<dbReference type="PANTHER" id="PTHR11006:SF47">
    <property type="entry name" value="PROTEIN ARGININE N-METHYLTRANSFERASE 8"/>
    <property type="match status" value="1"/>
</dbReference>
<dbReference type="Pfam" id="PF06325">
    <property type="entry name" value="PrmA"/>
    <property type="match status" value="1"/>
</dbReference>
<dbReference type="Pfam" id="PF22528">
    <property type="entry name" value="PRMT_C"/>
    <property type="match status" value="1"/>
</dbReference>
<dbReference type="SUPFAM" id="SSF53335">
    <property type="entry name" value="S-adenosyl-L-methionine-dependent methyltransferases"/>
    <property type="match status" value="1"/>
</dbReference>
<dbReference type="PROSITE" id="PS51678">
    <property type="entry name" value="SAM_MT_PRMT"/>
    <property type="match status" value="1"/>
</dbReference>
<evidence type="ECO:0000250" key="1">
    <source>
        <dbReference type="UniProtKB" id="Q63009"/>
    </source>
</evidence>
<evidence type="ECO:0000255" key="2">
    <source>
        <dbReference type="PROSITE-ProRule" id="PRU01015"/>
    </source>
</evidence>
<evidence type="ECO:0000256" key="3">
    <source>
        <dbReference type="SAM" id="MobiDB-lite"/>
    </source>
</evidence>
<evidence type="ECO:0000269" key="4">
    <source>
    </source>
</evidence>
<evidence type="ECO:0000269" key="5">
    <source>
    </source>
</evidence>
<evidence type="ECO:0000269" key="6">
    <source>
    </source>
</evidence>
<evidence type="ECO:0000269" key="7">
    <source>
    </source>
</evidence>
<evidence type="ECO:0000269" key="8">
    <source>
    </source>
</evidence>
<evidence type="ECO:0000303" key="9">
    <source>
    </source>
</evidence>
<evidence type="ECO:0000305" key="10"/>
<evidence type="ECO:0000305" key="11">
    <source>
    </source>
</evidence>
<evidence type="ECO:0000305" key="12">
    <source>
    </source>
</evidence>
<evidence type="ECO:0000305" key="13">
    <source>
    </source>
</evidence>
<evidence type="ECO:0000312" key="14">
    <source>
        <dbReference type="HGNC" id="HGNC:5188"/>
    </source>
</evidence>
<evidence type="ECO:0007744" key="15">
    <source>
        <dbReference type="PDB" id="4X41"/>
    </source>
</evidence>
<evidence type="ECO:0007744" key="16">
    <source>
        <dbReference type="PDB" id="5DST"/>
    </source>
</evidence>
<evidence type="ECO:0007829" key="17">
    <source>
        <dbReference type="PDB" id="4X41"/>
    </source>
</evidence>
<evidence type="ECO:0007829" key="18">
    <source>
        <dbReference type="PDB" id="5DST"/>
    </source>
</evidence>
<organism>
    <name type="scientific">Homo sapiens</name>
    <name type="common">Human</name>
    <dbReference type="NCBI Taxonomy" id="9606"/>
    <lineage>
        <taxon>Eukaryota</taxon>
        <taxon>Metazoa</taxon>
        <taxon>Chordata</taxon>
        <taxon>Craniata</taxon>
        <taxon>Vertebrata</taxon>
        <taxon>Euteleostomi</taxon>
        <taxon>Mammalia</taxon>
        <taxon>Eutheria</taxon>
        <taxon>Euarchontoglires</taxon>
        <taxon>Primates</taxon>
        <taxon>Haplorrhini</taxon>
        <taxon>Catarrhini</taxon>
        <taxon>Hominidae</taxon>
        <taxon>Homo</taxon>
    </lineage>
</organism>
<feature type="initiator methionine" description="Removed" evidence="4 8">
    <location>
        <position position="1"/>
    </location>
</feature>
<feature type="chain" id="PRO_0000212329" description="Protein arginine N-methyltransferase 8">
    <location>
        <begin position="2"/>
        <end position="394"/>
    </location>
</feature>
<feature type="domain" description="SAM-dependent MTase PRMT-type" evidence="2">
    <location>
        <begin position="73"/>
        <end position="394"/>
    </location>
</feature>
<feature type="region of interest" description="Disordered" evidence="3">
    <location>
        <begin position="16"/>
        <end position="40"/>
    </location>
</feature>
<feature type="short sequence motif" description="SH3-binding 1" evidence="5">
    <location>
        <begin position="29"/>
        <end position="42"/>
    </location>
</feature>
<feature type="short sequence motif" description="SH3-binding 2" evidence="5">
    <location>
        <begin position="53"/>
        <end position="58"/>
    </location>
</feature>
<feature type="compositionally biased region" description="Pro residues" evidence="3">
    <location>
        <begin position="30"/>
        <end position="39"/>
    </location>
</feature>
<feature type="active site" evidence="1">
    <location>
        <position position="185"/>
    </location>
</feature>
<feature type="active site" evidence="1">
    <location>
        <position position="194"/>
    </location>
</feature>
<feature type="binding site" evidence="1">
    <location>
        <position position="86"/>
    </location>
    <ligand>
        <name>S-adenosyl-L-methionine</name>
        <dbReference type="ChEBI" id="CHEBI:59789"/>
    </ligand>
</feature>
<feature type="binding site" evidence="12 13 15 16">
    <location>
        <position position="95"/>
    </location>
    <ligand>
        <name>S-adenosyl-L-methionine</name>
        <dbReference type="ChEBI" id="CHEBI:59789"/>
    </ligand>
</feature>
<feature type="binding site" evidence="12 13 15 16">
    <location>
        <begin position="119"/>
        <end position="122"/>
    </location>
    <ligand>
        <name>S-adenosyl-L-methionine</name>
        <dbReference type="ChEBI" id="CHEBI:59789"/>
    </ligand>
</feature>
<feature type="binding site" evidence="13 16">
    <location>
        <position position="119"/>
    </location>
    <ligand>
        <name>S-adenosyl-L-methionine</name>
        <dbReference type="ChEBI" id="CHEBI:59789"/>
    </ligand>
</feature>
<feature type="binding site" evidence="12 13 15 16">
    <location>
        <position position="141"/>
    </location>
    <ligand>
        <name>S-adenosyl-L-methionine</name>
        <dbReference type="ChEBI" id="CHEBI:59789"/>
    </ligand>
</feature>
<feature type="binding site" evidence="13 16">
    <location>
        <position position="170"/>
    </location>
    <ligand>
        <name>S-adenosyl-L-methionine</name>
        <dbReference type="ChEBI" id="CHEBI:59789"/>
    </ligand>
</feature>
<feature type="modified residue" description="Omega-N-methylarginine; by autocatalysis" evidence="5">
    <location>
        <position position="58"/>
    </location>
</feature>
<feature type="modified residue" description="Asymmetric dimethylarginine; by autocatalysis" evidence="5">
    <location>
        <position position="73"/>
    </location>
</feature>
<feature type="lipid moiety-binding region" description="N-myristoyl glycine" evidence="4 8">
    <location>
        <position position="2"/>
    </location>
</feature>
<feature type="splice variant" id="VSP_037466" description="In isoform 2." evidence="9">
    <original>MGMKHSSRCLLLRRKMAENAAESTE</original>
    <variation>MESLASDGFKLKEVSS</variation>
    <location>
        <begin position="1"/>
        <end position="25"/>
    </location>
</feature>
<feature type="mutagenesis site" description="Loss of cell membrane localization." evidence="5 8">
    <original>G</original>
    <variation>A</variation>
    <location>
        <position position="2"/>
    </location>
</feature>
<feature type="mutagenesis site" description="No effect on homodimerization but decreased homooligomerization; when associated with A-295 and A-349." evidence="8">
    <original>C</original>
    <variation>A</variation>
    <location>
        <position position="273"/>
    </location>
</feature>
<feature type="mutagenesis site" description="No effect on homodimerization but decreased homooligomerization; when associated with A-273 and A-349." evidence="8">
    <original>C</original>
    <variation>A</variation>
    <location>
        <position position="295"/>
    </location>
</feature>
<feature type="mutagenesis site" description="Decreases homooligomerization and cell membrane localization. No effect on homodimerization, S-adenosyl-L-methionine binding and EWS protein methylation. No effect on homodimerization but loss of homooligomerization and cell membrane localization; when associated with A-345 and A-382. No effect on S-adenosyl-L-methionine binding but reduced EWS protein methylation; when associated with A-345 and A-382." evidence="8">
    <original>Y</original>
    <variation>A</variation>
    <location>
        <position position="303"/>
    </location>
</feature>
<feature type="mutagenesis site" description="No effect on homooligomerization. No effect on S-adenosyl-L-methionine binding and EWS protein methylation. No effect on homodimerization but loss of homooligomerization and cell membrane localization; when associated with A-303 and A-382. No effect on S-adenosyl-L-methionine binding but reduced EWS protein methylation; when associated with A-303 and A-382." evidence="8">
    <original>Y</original>
    <variation>A</variation>
    <location>
        <position position="345"/>
    </location>
</feature>
<feature type="mutagenesis site" description="No effect on homodimerization but decreased homooligomerization; when associated with A-273 and A-295." evidence="8">
    <original>R</original>
    <variation>A</variation>
    <location>
        <position position="349"/>
    </location>
</feature>
<feature type="mutagenesis site" description="No effect on homooligomerization. No effect on S-adenosyl-L-methionine binding and EWS protein methylation. No effect on homodimerization but loss of homooligomerization and cell membrane localization; when associated with A-303 and A-345. No effect on S-adenosyl-L-methionine binding but reduced EWS protein methylation; when associated with A-303 and A-345." evidence="8">
    <original>L</original>
    <variation>A</variation>
    <location>
        <position position="382"/>
    </location>
</feature>
<feature type="sequence conflict" description="In Ref. 3; AAH22458." evidence="10" ref="3">
    <original>E</original>
    <variation>Q</variation>
    <location>
        <position position="150"/>
    </location>
</feature>
<feature type="helix" evidence="18">
    <location>
        <begin position="83"/>
        <end position="91"/>
    </location>
</feature>
<feature type="helix" evidence="18">
    <location>
        <begin position="93"/>
        <end position="104"/>
    </location>
</feature>
<feature type="helix" evidence="18">
    <location>
        <begin position="107"/>
        <end position="110"/>
    </location>
</feature>
<feature type="strand" evidence="18">
    <location>
        <begin position="114"/>
        <end position="119"/>
    </location>
</feature>
<feature type="helix" evidence="18">
    <location>
        <begin position="124"/>
        <end position="131"/>
    </location>
</feature>
<feature type="strand" evidence="18">
    <location>
        <begin position="135"/>
        <end position="141"/>
    </location>
</feature>
<feature type="helix" evidence="18">
    <location>
        <begin position="145"/>
        <end position="155"/>
    </location>
</feature>
<feature type="turn" evidence="18">
    <location>
        <begin position="159"/>
        <end position="161"/>
    </location>
</feature>
<feature type="strand" evidence="18">
    <location>
        <begin position="162"/>
        <end position="167"/>
    </location>
</feature>
<feature type="turn" evidence="18">
    <location>
        <begin position="169"/>
        <end position="171"/>
    </location>
</feature>
<feature type="strand" evidence="18">
    <location>
        <begin position="175"/>
        <end position="177"/>
    </location>
</feature>
<feature type="strand" evidence="18">
    <location>
        <begin position="179"/>
        <end position="183"/>
    </location>
</feature>
<feature type="turn" evidence="18">
    <location>
        <begin position="192"/>
        <end position="194"/>
    </location>
</feature>
<feature type="helix" evidence="18">
    <location>
        <begin position="197"/>
        <end position="207"/>
    </location>
</feature>
<feature type="strand" evidence="18">
    <location>
        <begin position="208"/>
        <end position="216"/>
    </location>
</feature>
<feature type="strand" evidence="18">
    <location>
        <begin position="218"/>
        <end position="226"/>
    </location>
</feature>
<feature type="helix" evidence="18">
    <location>
        <begin position="229"/>
        <end position="235"/>
    </location>
</feature>
<feature type="helix" evidence="18">
    <location>
        <begin position="237"/>
        <end position="240"/>
    </location>
</feature>
<feature type="helix" evidence="18">
    <location>
        <begin position="248"/>
        <end position="255"/>
    </location>
</feature>
<feature type="strand" evidence="18">
    <location>
        <begin position="259"/>
        <end position="261"/>
    </location>
</feature>
<feature type="helix" evidence="18">
    <location>
        <begin position="265"/>
        <end position="267"/>
    </location>
</feature>
<feature type="strand" evidence="18">
    <location>
        <begin position="273"/>
        <end position="279"/>
    </location>
</feature>
<feature type="turn" evidence="18">
    <location>
        <begin position="280"/>
        <end position="282"/>
    </location>
</feature>
<feature type="helix" evidence="18">
    <location>
        <begin position="285"/>
        <end position="288"/>
    </location>
</feature>
<feature type="strand" evidence="18">
    <location>
        <begin position="289"/>
        <end position="298"/>
    </location>
</feature>
<feature type="strand" evidence="18">
    <location>
        <begin position="300"/>
        <end position="315"/>
    </location>
</feature>
<feature type="strand" evidence="18">
    <location>
        <begin position="318"/>
        <end position="320"/>
    </location>
</feature>
<feature type="strand" evidence="18">
    <location>
        <begin position="322"/>
        <end position="325"/>
    </location>
</feature>
<feature type="strand" evidence="18">
    <location>
        <begin position="337"/>
        <end position="348"/>
    </location>
</feature>
<feature type="strand" evidence="18">
    <location>
        <begin position="353"/>
        <end position="362"/>
    </location>
</feature>
<feature type="strand" evidence="17">
    <location>
        <begin position="364"/>
        <end position="366"/>
    </location>
</feature>
<feature type="strand" evidence="18">
    <location>
        <begin position="369"/>
        <end position="379"/>
    </location>
</feature>
<feature type="strand" evidence="18">
    <location>
        <begin position="384"/>
        <end position="393"/>
    </location>
</feature>
<reference key="1">
    <citation type="journal article" date="2004" name="Nat. Genet.">
        <title>Complete sequencing and characterization of 21,243 full-length human cDNAs.</title>
        <authorList>
            <person name="Ota T."/>
            <person name="Suzuki Y."/>
            <person name="Nishikawa T."/>
            <person name="Otsuki T."/>
            <person name="Sugiyama T."/>
            <person name="Irie R."/>
            <person name="Wakamatsu A."/>
            <person name="Hayashi K."/>
            <person name="Sato H."/>
            <person name="Nagai K."/>
            <person name="Kimura K."/>
            <person name="Makita H."/>
            <person name="Sekine M."/>
            <person name="Obayashi M."/>
            <person name="Nishi T."/>
            <person name="Shibahara T."/>
            <person name="Tanaka T."/>
            <person name="Ishii S."/>
            <person name="Yamamoto J."/>
            <person name="Saito K."/>
            <person name="Kawai Y."/>
            <person name="Isono Y."/>
            <person name="Nakamura Y."/>
            <person name="Nagahari K."/>
            <person name="Murakami K."/>
            <person name="Yasuda T."/>
            <person name="Iwayanagi T."/>
            <person name="Wagatsuma M."/>
            <person name="Shiratori A."/>
            <person name="Sudo H."/>
            <person name="Hosoiri T."/>
            <person name="Kaku Y."/>
            <person name="Kodaira H."/>
            <person name="Kondo H."/>
            <person name="Sugawara M."/>
            <person name="Takahashi M."/>
            <person name="Kanda K."/>
            <person name="Yokoi T."/>
            <person name="Furuya T."/>
            <person name="Kikkawa E."/>
            <person name="Omura Y."/>
            <person name="Abe K."/>
            <person name="Kamihara K."/>
            <person name="Katsuta N."/>
            <person name="Sato K."/>
            <person name="Tanikawa M."/>
            <person name="Yamazaki M."/>
            <person name="Ninomiya K."/>
            <person name="Ishibashi T."/>
            <person name="Yamashita H."/>
            <person name="Murakawa K."/>
            <person name="Fujimori K."/>
            <person name="Tanai H."/>
            <person name="Kimata M."/>
            <person name="Watanabe M."/>
            <person name="Hiraoka S."/>
            <person name="Chiba Y."/>
            <person name="Ishida S."/>
            <person name="Ono Y."/>
            <person name="Takiguchi S."/>
            <person name="Watanabe S."/>
            <person name="Yosida M."/>
            <person name="Hotuta T."/>
            <person name="Kusano J."/>
            <person name="Kanehori K."/>
            <person name="Takahashi-Fujii A."/>
            <person name="Hara H."/>
            <person name="Tanase T.-O."/>
            <person name="Nomura Y."/>
            <person name="Togiya S."/>
            <person name="Komai F."/>
            <person name="Hara R."/>
            <person name="Takeuchi K."/>
            <person name="Arita M."/>
            <person name="Imose N."/>
            <person name="Musashino K."/>
            <person name="Yuuki H."/>
            <person name="Oshima A."/>
            <person name="Sasaki N."/>
            <person name="Aotsuka S."/>
            <person name="Yoshikawa Y."/>
            <person name="Matsunawa H."/>
            <person name="Ichihara T."/>
            <person name="Shiohata N."/>
            <person name="Sano S."/>
            <person name="Moriya S."/>
            <person name="Momiyama H."/>
            <person name="Satoh N."/>
            <person name="Takami S."/>
            <person name="Terashima Y."/>
            <person name="Suzuki O."/>
            <person name="Nakagawa S."/>
            <person name="Senoh A."/>
            <person name="Mizoguchi H."/>
            <person name="Goto Y."/>
            <person name="Shimizu F."/>
            <person name="Wakebe H."/>
            <person name="Hishigaki H."/>
            <person name="Watanabe T."/>
            <person name="Sugiyama A."/>
            <person name="Takemoto M."/>
            <person name="Kawakami B."/>
            <person name="Yamazaki M."/>
            <person name="Watanabe K."/>
            <person name="Kumagai A."/>
            <person name="Itakura S."/>
            <person name="Fukuzumi Y."/>
            <person name="Fujimori Y."/>
            <person name="Komiyama M."/>
            <person name="Tashiro H."/>
            <person name="Tanigami A."/>
            <person name="Fujiwara T."/>
            <person name="Ono T."/>
            <person name="Yamada K."/>
            <person name="Fujii Y."/>
            <person name="Ozaki K."/>
            <person name="Hirao M."/>
            <person name="Ohmori Y."/>
            <person name="Kawabata A."/>
            <person name="Hikiji T."/>
            <person name="Kobatake N."/>
            <person name="Inagaki H."/>
            <person name="Ikema Y."/>
            <person name="Okamoto S."/>
            <person name="Okitani R."/>
            <person name="Kawakami T."/>
            <person name="Noguchi S."/>
            <person name="Itoh T."/>
            <person name="Shigeta K."/>
            <person name="Senba T."/>
            <person name="Matsumura K."/>
            <person name="Nakajima Y."/>
            <person name="Mizuno T."/>
            <person name="Morinaga M."/>
            <person name="Sasaki M."/>
            <person name="Togashi T."/>
            <person name="Oyama M."/>
            <person name="Hata H."/>
            <person name="Watanabe M."/>
            <person name="Komatsu T."/>
            <person name="Mizushima-Sugano J."/>
            <person name="Satoh T."/>
            <person name="Shirai Y."/>
            <person name="Takahashi Y."/>
            <person name="Nakagawa K."/>
            <person name="Okumura K."/>
            <person name="Nagase T."/>
            <person name="Nomura N."/>
            <person name="Kikuchi H."/>
            <person name="Masuho Y."/>
            <person name="Yamashita R."/>
            <person name="Nakai K."/>
            <person name="Yada T."/>
            <person name="Nakamura Y."/>
            <person name="Ohara O."/>
            <person name="Isogai T."/>
            <person name="Sugano S."/>
        </authorList>
    </citation>
    <scope>NUCLEOTIDE SEQUENCE [LARGE SCALE MRNA] (ISOFORM 2)</scope>
    <source>
        <tissue>Neuroepithelioma</tissue>
    </source>
</reference>
<reference key="2">
    <citation type="journal article" date="2006" name="Nature">
        <title>The finished DNA sequence of human chromosome 12.</title>
        <authorList>
            <person name="Scherer S.E."/>
            <person name="Muzny D.M."/>
            <person name="Buhay C.J."/>
            <person name="Chen R."/>
            <person name="Cree A."/>
            <person name="Ding Y."/>
            <person name="Dugan-Rocha S."/>
            <person name="Gill R."/>
            <person name="Gunaratne P."/>
            <person name="Harris R.A."/>
            <person name="Hawes A.C."/>
            <person name="Hernandez J."/>
            <person name="Hodgson A.V."/>
            <person name="Hume J."/>
            <person name="Jackson A."/>
            <person name="Khan Z.M."/>
            <person name="Kovar-Smith C."/>
            <person name="Lewis L.R."/>
            <person name="Lozado R.J."/>
            <person name="Metzker M.L."/>
            <person name="Milosavljevic A."/>
            <person name="Miner G.R."/>
            <person name="Montgomery K.T."/>
            <person name="Morgan M.B."/>
            <person name="Nazareth L.V."/>
            <person name="Scott G."/>
            <person name="Sodergren E."/>
            <person name="Song X.-Z."/>
            <person name="Steffen D."/>
            <person name="Lovering R.C."/>
            <person name="Wheeler D.A."/>
            <person name="Worley K.C."/>
            <person name="Yuan Y."/>
            <person name="Zhang Z."/>
            <person name="Adams C.Q."/>
            <person name="Ansari-Lari M.A."/>
            <person name="Ayele M."/>
            <person name="Brown M.J."/>
            <person name="Chen G."/>
            <person name="Chen Z."/>
            <person name="Clerc-Blankenburg K.P."/>
            <person name="Davis C."/>
            <person name="Delgado O."/>
            <person name="Dinh H.H."/>
            <person name="Draper H."/>
            <person name="Gonzalez-Garay M.L."/>
            <person name="Havlak P."/>
            <person name="Jackson L.R."/>
            <person name="Jacob L.S."/>
            <person name="Kelly S.H."/>
            <person name="Li L."/>
            <person name="Li Z."/>
            <person name="Liu J."/>
            <person name="Liu W."/>
            <person name="Lu J."/>
            <person name="Maheshwari M."/>
            <person name="Nguyen B.-V."/>
            <person name="Okwuonu G.O."/>
            <person name="Pasternak S."/>
            <person name="Perez L.M."/>
            <person name="Plopper F.J.H."/>
            <person name="Santibanez J."/>
            <person name="Shen H."/>
            <person name="Tabor P.E."/>
            <person name="Verduzco D."/>
            <person name="Waldron L."/>
            <person name="Wang Q."/>
            <person name="Williams G.A."/>
            <person name="Zhang J."/>
            <person name="Zhou J."/>
            <person name="Allen C.C."/>
            <person name="Amin A.G."/>
            <person name="Anyalebechi V."/>
            <person name="Bailey M."/>
            <person name="Barbaria J.A."/>
            <person name="Bimage K.E."/>
            <person name="Bryant N.P."/>
            <person name="Burch P.E."/>
            <person name="Burkett C.E."/>
            <person name="Burrell K.L."/>
            <person name="Calderon E."/>
            <person name="Cardenas V."/>
            <person name="Carter K."/>
            <person name="Casias K."/>
            <person name="Cavazos I."/>
            <person name="Cavazos S.R."/>
            <person name="Ceasar H."/>
            <person name="Chacko J."/>
            <person name="Chan S.N."/>
            <person name="Chavez D."/>
            <person name="Christopoulos C."/>
            <person name="Chu J."/>
            <person name="Cockrell R."/>
            <person name="Cox C.D."/>
            <person name="Dang M."/>
            <person name="Dathorne S.R."/>
            <person name="David R."/>
            <person name="Davis C.M."/>
            <person name="Davy-Carroll L."/>
            <person name="Deshazo D.R."/>
            <person name="Donlin J.E."/>
            <person name="D'Souza L."/>
            <person name="Eaves K.A."/>
            <person name="Egan A."/>
            <person name="Emery-Cohen A.J."/>
            <person name="Escotto M."/>
            <person name="Flagg N."/>
            <person name="Forbes L.D."/>
            <person name="Gabisi A.M."/>
            <person name="Garza M."/>
            <person name="Hamilton C."/>
            <person name="Henderson N."/>
            <person name="Hernandez O."/>
            <person name="Hines S."/>
            <person name="Hogues M.E."/>
            <person name="Huang M."/>
            <person name="Idlebird D.G."/>
            <person name="Johnson R."/>
            <person name="Jolivet A."/>
            <person name="Jones S."/>
            <person name="Kagan R."/>
            <person name="King L.M."/>
            <person name="Leal B."/>
            <person name="Lebow H."/>
            <person name="Lee S."/>
            <person name="LeVan J.M."/>
            <person name="Lewis L.C."/>
            <person name="London P."/>
            <person name="Lorensuhewa L.M."/>
            <person name="Loulseged H."/>
            <person name="Lovett D.A."/>
            <person name="Lucier A."/>
            <person name="Lucier R.L."/>
            <person name="Ma J."/>
            <person name="Madu R.C."/>
            <person name="Mapua P."/>
            <person name="Martindale A.D."/>
            <person name="Martinez E."/>
            <person name="Massey E."/>
            <person name="Mawhiney S."/>
            <person name="Meador M.G."/>
            <person name="Mendez S."/>
            <person name="Mercado C."/>
            <person name="Mercado I.C."/>
            <person name="Merritt C.E."/>
            <person name="Miner Z.L."/>
            <person name="Minja E."/>
            <person name="Mitchell T."/>
            <person name="Mohabbat F."/>
            <person name="Mohabbat K."/>
            <person name="Montgomery B."/>
            <person name="Moore N."/>
            <person name="Morris S."/>
            <person name="Munidasa M."/>
            <person name="Ngo R.N."/>
            <person name="Nguyen N.B."/>
            <person name="Nickerson E."/>
            <person name="Nwaokelemeh O.O."/>
            <person name="Nwokenkwo S."/>
            <person name="Obregon M."/>
            <person name="Oguh M."/>
            <person name="Oragunye N."/>
            <person name="Oviedo R.J."/>
            <person name="Parish B.J."/>
            <person name="Parker D.N."/>
            <person name="Parrish J."/>
            <person name="Parks K.L."/>
            <person name="Paul H.A."/>
            <person name="Payton B.A."/>
            <person name="Perez A."/>
            <person name="Perrin W."/>
            <person name="Pickens A."/>
            <person name="Primus E.L."/>
            <person name="Pu L.-L."/>
            <person name="Puazo M."/>
            <person name="Quiles M.M."/>
            <person name="Quiroz J.B."/>
            <person name="Rabata D."/>
            <person name="Reeves K."/>
            <person name="Ruiz S.J."/>
            <person name="Shao H."/>
            <person name="Sisson I."/>
            <person name="Sonaike T."/>
            <person name="Sorelle R.P."/>
            <person name="Sutton A.E."/>
            <person name="Svatek A.F."/>
            <person name="Svetz L.A."/>
            <person name="Tamerisa K.S."/>
            <person name="Taylor T.R."/>
            <person name="Teague B."/>
            <person name="Thomas N."/>
            <person name="Thorn R.D."/>
            <person name="Trejos Z.Y."/>
            <person name="Trevino B.K."/>
            <person name="Ukegbu O.N."/>
            <person name="Urban J.B."/>
            <person name="Vasquez L.I."/>
            <person name="Vera V.A."/>
            <person name="Villasana D.M."/>
            <person name="Wang L."/>
            <person name="Ward-Moore S."/>
            <person name="Warren J.T."/>
            <person name="Wei X."/>
            <person name="White F."/>
            <person name="Williamson A.L."/>
            <person name="Wleczyk R."/>
            <person name="Wooden H.S."/>
            <person name="Wooden S.H."/>
            <person name="Yen J."/>
            <person name="Yoon L."/>
            <person name="Yoon V."/>
            <person name="Zorrilla S.E."/>
            <person name="Nelson D."/>
            <person name="Kucherlapati R."/>
            <person name="Weinstock G."/>
            <person name="Gibbs R.A."/>
        </authorList>
    </citation>
    <scope>NUCLEOTIDE SEQUENCE [LARGE SCALE GENOMIC DNA]</scope>
</reference>
<reference key="3">
    <citation type="journal article" date="2004" name="Genome Res.">
        <title>The status, quality, and expansion of the NIH full-length cDNA project: the Mammalian Gene Collection (MGC).</title>
        <authorList>
            <consortium name="The MGC Project Team"/>
        </authorList>
    </citation>
    <scope>NUCLEOTIDE SEQUENCE [LARGE SCALE MRNA] (ISOFORM 1)</scope>
    <source>
        <tissue>Brain</tissue>
    </source>
</reference>
<reference key="4">
    <citation type="submission" date="2000-05" db="EMBL/GenBank/DDBJ databases">
        <title>Transcripts in human map region 12p13.3.</title>
        <authorList>
            <person name="Lorenz B."/>
            <person name="Strom T.M."/>
        </authorList>
    </citation>
    <scope>NUCLEOTIDE SEQUENCE [MRNA] OF 37-394 (ISOFORM 1)</scope>
    <source>
        <tissue>Brain</tissue>
    </source>
</reference>
<reference key="5">
    <citation type="journal article" date="2005" name="J. Biol. Chem.">
        <title>PRMT8, a new membrane-bound tissue-specific member of the protein arginine methyltransferase family.</title>
        <authorList>
            <person name="Lee J."/>
            <person name="Sayegh J."/>
            <person name="Daniel J."/>
            <person name="Clarke S."/>
            <person name="Bedford M.T."/>
        </authorList>
    </citation>
    <scope>FUNCTION</scope>
    <scope>CATALYTIC ACTIVITY</scope>
    <scope>SUBUNIT</scope>
    <scope>TISSUE SPECIFICITY</scope>
    <scope>SUBCELLULAR LOCATION</scope>
    <scope>MYRISTOYLATION AT GLY-2</scope>
    <scope>MUTAGENESIS OF GLY-2</scope>
</reference>
<reference key="6">
    <citation type="journal article" date="2007" name="J. Biol. Chem.">
        <title>Regulation of protein arginine methyltransferase 8 (PRMT8) activity by its N-terminal domain.</title>
        <authorList>
            <person name="Sayegh J."/>
            <person name="Webb K."/>
            <person name="Cheng D."/>
            <person name="Bedford M.T."/>
            <person name="Clarke S.G."/>
        </authorList>
    </citation>
    <scope>FUNCTION</scope>
    <scope>CATALYTIC ACTIVITY</scope>
    <scope>N-TERMINAL REGION DOMAIN</scope>
    <scope>DOMAIN SH3-BINDING MOTIF</scope>
    <scope>METHYLATION AT ARG-58 AND ARG-73</scope>
    <scope>INTERACTION WITH PRMT2 AND FYN</scope>
</reference>
<reference key="7">
    <citation type="journal article" date="2008" name="Proteins">
        <title>Identification of proteins interacting with protein arginine methyltransferase 8: the Ewing sarcoma (EWS) protein binds independent of its methylation state.</title>
        <authorList>
            <person name="Pahlich S."/>
            <person name="Zakaryan R.P."/>
            <person name="Gehring H."/>
        </authorList>
    </citation>
    <scope>FUNCTION</scope>
    <scope>CATALYTIC ACTIVITY</scope>
    <scope>BIOPHYSICOCHEMICAL PROPERTIES</scope>
    <scope>SUBCELLULAR LOCATION</scope>
    <scope>INTERACTION WITH EWS</scope>
</reference>
<reference evidence="16" key="8">
    <citation type="journal article" date="2016" name="J. Mol. Biol.">
        <title>Novel helical assembly in arginine methyltransferase 8.</title>
        <authorList>
            <person name="Toma-Fukai S."/>
            <person name="Kim J.D."/>
            <person name="Park K.E."/>
            <person name="Kuwabara N."/>
            <person name="Shimizu N."/>
            <person name="Krayukhina E."/>
            <person name="Uchiyama S."/>
            <person name="Fukamizu A."/>
            <person name="Shimizu T."/>
        </authorList>
    </citation>
    <scope>X-RAY CRYSTALLOGRAPHY (2.96 ANGSTROMS) OF 68-394 OF HOMODIMER IN COMPLEX WITH S-ADENOSYL-L-HOMOCYSTEINE</scope>
    <scope>FUNCTION</scope>
    <scope>SUBUNIT</scope>
    <scope>S-ADENOSYL-L-METHIONINE-BINDING</scope>
    <scope>SUBCELLULAR LOCATION</scope>
    <scope>MYRISTOYLATION AT GLY-2</scope>
    <scope>MUTAGENESIS OF GLY-2; CYS-273; CYS-295; TYR-303; TYR-345; ARG-349 AND LEU-382</scope>
</reference>
<reference evidence="15" key="9">
    <citation type="journal article" date="2015" name="Biochemistry">
        <title>Protein Arginine Methyltransferase 8: Tetrameric Structure and Protein Substrate Specificity.</title>
        <authorList>
            <person name="Lee W.C."/>
            <person name="Lin W.L."/>
            <person name="Matsui T."/>
            <person name="Chen E.S."/>
            <person name="Wei T.Y."/>
            <person name="Lin W.H."/>
            <person name="Hu H."/>
            <person name="Zheng Y.G."/>
            <person name="Tsai M.D."/>
            <person name="Ho M.C."/>
        </authorList>
    </citation>
    <scope>X-RAY CRYSTALLOGRAPHY (3.50 ANGSTROMS) OF 61-394 OF HOMODIMER IN COMPLEX IN COMPLEX WITH S-ADENOSYL-L-HOMOCYSTEINE</scope>
    <scope>FUNCTION</scope>
    <scope>SUBUNIT</scope>
</reference>
<name>ANM8_HUMAN</name>